<organism>
    <name type="scientific">Faxonius limosus</name>
    <name type="common">Spinycheek crayfish</name>
    <name type="synonym">Orconectes limosus</name>
    <dbReference type="NCBI Taxonomy" id="28379"/>
    <lineage>
        <taxon>Eukaryota</taxon>
        <taxon>Metazoa</taxon>
        <taxon>Ecdysozoa</taxon>
        <taxon>Arthropoda</taxon>
        <taxon>Crustacea</taxon>
        <taxon>Multicrustacea</taxon>
        <taxon>Malacostraca</taxon>
        <taxon>Eumalacostraca</taxon>
        <taxon>Eucarida</taxon>
        <taxon>Decapoda</taxon>
        <taxon>Pleocyemata</taxon>
        <taxon>Astacidea</taxon>
        <taxon>Astacoidea</taxon>
        <taxon>Cambaridae</taxon>
        <taxon>Faxonius</taxon>
    </lineage>
</organism>
<dbReference type="PIR" id="S67524">
    <property type="entry name" value="S67524"/>
</dbReference>
<dbReference type="iPTMnet" id="P80363"/>
<dbReference type="GO" id="GO:0005509">
    <property type="term" value="F:calcium ion binding"/>
    <property type="evidence" value="ECO:0007669"/>
    <property type="project" value="InterPro"/>
</dbReference>
<dbReference type="CDD" id="cd00051">
    <property type="entry name" value="EFh"/>
    <property type="match status" value="1"/>
</dbReference>
<dbReference type="Gene3D" id="1.10.238.10">
    <property type="entry name" value="EF-hand"/>
    <property type="match status" value="2"/>
</dbReference>
<dbReference type="InterPro" id="IPR051581">
    <property type="entry name" value="Ca-bind_SignalingProt"/>
</dbReference>
<dbReference type="InterPro" id="IPR011992">
    <property type="entry name" value="EF-hand-dom_pair"/>
</dbReference>
<dbReference type="InterPro" id="IPR002048">
    <property type="entry name" value="EF_hand_dom"/>
</dbReference>
<dbReference type="PANTHER" id="PTHR34524">
    <property type="entry name" value="CALCYPHOSIN"/>
    <property type="match status" value="1"/>
</dbReference>
<dbReference type="PANTHER" id="PTHR34524:SF6">
    <property type="entry name" value="CALCYPHOSINE LIKE"/>
    <property type="match status" value="1"/>
</dbReference>
<dbReference type="Pfam" id="PF13499">
    <property type="entry name" value="EF-hand_7"/>
    <property type="match status" value="1"/>
</dbReference>
<dbReference type="SMART" id="SM00054">
    <property type="entry name" value="EFh"/>
    <property type="match status" value="4"/>
</dbReference>
<dbReference type="SUPFAM" id="SSF47473">
    <property type="entry name" value="EF-hand"/>
    <property type="match status" value="1"/>
</dbReference>
<dbReference type="PROSITE" id="PS50222">
    <property type="entry name" value="EF_HAND_2"/>
    <property type="match status" value="4"/>
</dbReference>
<reference key="1">
    <citation type="journal article" date="1995" name="Eur. J. Biochem.">
        <title>A novel EF-hand Ca(2+)-binding protein from abdominal muscle of crustaceans with similarity to calcyphosine from dog thyroidea.</title>
        <authorList>
            <person name="Sauter A."/>
            <person name="Staudenmann W."/>
            <person name="Hughes G.J."/>
            <person name="Heizmann C.W."/>
        </authorList>
    </citation>
    <scope>PROTEIN SEQUENCE</scope>
    <scope>ACETYLATION AT SER-1</scope>
    <source>
        <tissue>Abdominal muscle</tissue>
    </source>
</reference>
<evidence type="ECO:0000255" key="1">
    <source>
        <dbReference type="PROSITE-ProRule" id="PRU00448"/>
    </source>
</evidence>
<evidence type="ECO:0000269" key="2">
    <source>
    </source>
</evidence>
<evidence type="ECO:0000305" key="3"/>
<keyword id="KW-0007">Acetylation</keyword>
<keyword id="KW-0106">Calcium</keyword>
<keyword id="KW-0903">Direct protein sequencing</keyword>
<keyword id="KW-1015">Disulfide bond</keyword>
<keyword id="KW-0479">Metal-binding</keyword>
<keyword id="KW-0677">Repeat</keyword>
<comment type="function">
    <text>Possibly acts as a regulatory protein and not as a calcium buffer or transport protein.</text>
</comment>
<comment type="subunit">
    <text>Monomer or disulfide-linked dimers.</text>
</comment>
<comment type="tissue specificity">
    <text>Striated muscle and brain.</text>
</comment>
<comment type="miscellaneous">
    <text>This protein binds calcium.</text>
</comment>
<protein>
    <recommendedName>
        <fullName>Crustacean calcium-binding protein 23</fullName>
        <shortName>CCBP-23</shortName>
    </recommendedName>
</protein>
<accession>P80363</accession>
<feature type="chain" id="PRO_0000073544" description="Crustacean calcium-binding protein 23">
    <location>
        <begin position="1"/>
        <end position="202"/>
    </location>
</feature>
<feature type="domain" description="EF-hand 1" evidence="1">
    <location>
        <begin position="33"/>
        <end position="68"/>
    </location>
</feature>
<feature type="domain" description="EF-hand 2" evidence="1">
    <location>
        <begin position="69"/>
        <end position="104"/>
    </location>
</feature>
<feature type="domain" description="EF-hand 3" evidence="1">
    <location>
        <begin position="105"/>
        <end position="140"/>
    </location>
</feature>
<feature type="domain" description="EF-hand 4" evidence="1">
    <location>
        <begin position="148"/>
        <end position="185"/>
    </location>
</feature>
<feature type="binding site" evidence="3">
    <location>
        <position position="84"/>
    </location>
    <ligand>
        <name>Ca(2+)</name>
        <dbReference type="ChEBI" id="CHEBI:29108"/>
        <label>1</label>
    </ligand>
</feature>
<feature type="binding site" evidence="3">
    <location>
        <position position="93"/>
    </location>
    <ligand>
        <name>Ca(2+)</name>
        <dbReference type="ChEBI" id="CHEBI:29108"/>
        <label>1</label>
    </ligand>
</feature>
<feature type="binding site" evidence="3">
    <location>
        <position position="118"/>
    </location>
    <ligand>
        <name>Ca(2+)</name>
        <dbReference type="ChEBI" id="CHEBI:29108"/>
        <label>2</label>
    </ligand>
</feature>
<feature type="binding site" evidence="3">
    <location>
        <position position="122"/>
    </location>
    <ligand>
        <name>Ca(2+)</name>
        <dbReference type="ChEBI" id="CHEBI:29108"/>
        <label>2</label>
    </ligand>
</feature>
<feature type="binding site" evidence="3">
    <location>
        <position position="129"/>
    </location>
    <ligand>
        <name>Ca(2+)</name>
        <dbReference type="ChEBI" id="CHEBI:29108"/>
        <label>2</label>
    </ligand>
</feature>
<feature type="modified residue" description="N-acetylserine" evidence="2">
    <location>
        <position position="1"/>
    </location>
</feature>
<feature type="unsure residue" description="L or I">
    <location>
        <position position="35"/>
    </location>
</feature>
<feature type="unsure residue" description="L or I">
    <location>
        <position position="36"/>
    </location>
</feature>
<name>CCB23_FAXLI</name>
<proteinExistence type="evidence at protein level"/>
<sequence length="202" mass="22850">SEAKLKEAAKETLKTTTDPLEKLRSHCLSQGYSGLLSLGRLFRRLDKDRSWTLSKEELSRGVGQFGLDLSDGDINKLFSSFEKDGQSGINYEEFLESLRPEMTEPRKKAVEAAFKHLDKTGDGVVGLEDIKGKYSAKTHPKVVKGEATEDEILKKFLNMFETNTSVDGKVTKKEFFDYYSGLSKAIDEDEYFVSMVNIMWXX</sequence>